<gene>
    <name evidence="1" type="primary">mnmC</name>
    <name type="ordered locus">SDY_2523</name>
</gene>
<proteinExistence type="inferred from homology"/>
<reference key="1">
    <citation type="journal article" date="2005" name="Nucleic Acids Res.">
        <title>Genome dynamics and diversity of Shigella species, the etiologic agents of bacillary dysentery.</title>
        <authorList>
            <person name="Yang F."/>
            <person name="Yang J."/>
            <person name="Zhang X."/>
            <person name="Chen L."/>
            <person name="Jiang Y."/>
            <person name="Yan Y."/>
            <person name="Tang X."/>
            <person name="Wang J."/>
            <person name="Xiong Z."/>
            <person name="Dong J."/>
            <person name="Xue Y."/>
            <person name="Zhu Y."/>
            <person name="Xu X."/>
            <person name="Sun L."/>
            <person name="Chen S."/>
            <person name="Nie H."/>
            <person name="Peng J."/>
            <person name="Xu J."/>
            <person name="Wang Y."/>
            <person name="Yuan Z."/>
            <person name="Wen Y."/>
            <person name="Yao Z."/>
            <person name="Shen Y."/>
            <person name="Qiang B."/>
            <person name="Hou Y."/>
            <person name="Yu J."/>
            <person name="Jin Q."/>
        </authorList>
    </citation>
    <scope>NUCLEOTIDE SEQUENCE [LARGE SCALE GENOMIC DNA]</scope>
    <source>
        <strain>Sd197</strain>
    </source>
</reference>
<name>MNMC_SHIDS</name>
<feature type="chain" id="PRO_0000348041" description="tRNA 5-methylaminomethyl-2-thiouridine biosynthesis bifunctional protein MnmC">
    <location>
        <begin position="1"/>
        <end position="668"/>
    </location>
</feature>
<feature type="region of interest" description="tRNA (mnm(5)s(2)U34)-methyltransferase">
    <location>
        <begin position="1"/>
        <end position="245"/>
    </location>
</feature>
<feature type="region of interest" description="FAD-dependent cmnm(5)s(2)U34 oxidoreductase">
    <location>
        <begin position="270"/>
        <end position="668"/>
    </location>
</feature>
<evidence type="ECO:0000255" key="1">
    <source>
        <dbReference type="HAMAP-Rule" id="MF_01102"/>
    </source>
</evidence>
<evidence type="ECO:0000305" key="2"/>
<organism>
    <name type="scientific">Shigella dysenteriae serotype 1 (strain Sd197)</name>
    <dbReference type="NCBI Taxonomy" id="300267"/>
    <lineage>
        <taxon>Bacteria</taxon>
        <taxon>Pseudomonadati</taxon>
        <taxon>Pseudomonadota</taxon>
        <taxon>Gammaproteobacteria</taxon>
        <taxon>Enterobacterales</taxon>
        <taxon>Enterobacteriaceae</taxon>
        <taxon>Shigella</taxon>
    </lineage>
</organism>
<accession>Q32DL2</accession>
<comment type="function">
    <text evidence="1">Catalyzes the last two steps in the biosynthesis of 5-methylaminomethyl-2-thiouridine (mnm(5)s(2)U) at the wobble position (U34) in tRNA. Catalyzes the FAD-dependent demodification of cmnm(5)s(2)U34 to nm(5)s(2)U34, followed by the transfer of a methyl group from S-adenosyl-L-methionine to nm(5)s(2)U34, to form mnm(5)s(2)U34.</text>
</comment>
<comment type="catalytic activity">
    <reaction evidence="1">
        <text>5-aminomethyl-2-thiouridine(34) in tRNA + S-adenosyl-L-methionine = 5-methylaminomethyl-2-thiouridine(34) in tRNA + S-adenosyl-L-homocysteine + H(+)</text>
        <dbReference type="Rhea" id="RHEA:19569"/>
        <dbReference type="Rhea" id="RHEA-COMP:10195"/>
        <dbReference type="Rhea" id="RHEA-COMP:10197"/>
        <dbReference type="ChEBI" id="CHEBI:15378"/>
        <dbReference type="ChEBI" id="CHEBI:57856"/>
        <dbReference type="ChEBI" id="CHEBI:59789"/>
        <dbReference type="ChEBI" id="CHEBI:74454"/>
        <dbReference type="ChEBI" id="CHEBI:74455"/>
        <dbReference type="EC" id="2.1.1.61"/>
    </reaction>
</comment>
<comment type="cofactor">
    <cofactor evidence="1">
        <name>FAD</name>
        <dbReference type="ChEBI" id="CHEBI:57692"/>
    </cofactor>
</comment>
<comment type="subcellular location">
    <subcellularLocation>
        <location evidence="1">Cytoplasm</location>
    </subcellularLocation>
</comment>
<comment type="similarity">
    <text evidence="1">In the N-terminal section; belongs to the methyltransferase superfamily. tRNA (mnm(5)s(2)U34)-methyltransferase family.</text>
</comment>
<comment type="similarity">
    <text evidence="1">In the C-terminal section; belongs to the DAO family.</text>
</comment>
<comment type="sequence caution" evidence="2">
    <conflict type="erroneous initiation">
        <sequence resource="EMBL-CDS" id="ABB62593"/>
    </conflict>
</comment>
<keyword id="KW-0963">Cytoplasm</keyword>
<keyword id="KW-0274">FAD</keyword>
<keyword id="KW-0285">Flavoprotein</keyword>
<keyword id="KW-0489">Methyltransferase</keyword>
<keyword id="KW-0511">Multifunctional enzyme</keyword>
<keyword id="KW-0560">Oxidoreductase</keyword>
<keyword id="KW-1185">Reference proteome</keyword>
<keyword id="KW-0949">S-adenosyl-L-methionine</keyword>
<keyword id="KW-0808">Transferase</keyword>
<keyword id="KW-0819">tRNA processing</keyword>
<sequence length="668" mass="74778">MKHYSIQPANLEFNAEGTPVSRDFDDVYFSNDNGLEETRYVFLGGNQLEARFPEYPHPLFVVAESGFGTGLNFLTLWQAFDQFREAHPQAQLQRLHFISFEKFPLTRSDLVLAHQHWPELAPWAEQLQAQWPMPLPGCHRLLLDEGRVTLDLWFGDINELTSQLDDSLNQKVDAWFLDGFAPAKNPDMWTQNLFNAMARLARPSGTLATFTSAGFVRRGLQDAGFTMQKRKGFGRKREMLCGVMEQTLPLPCSTPWFNRTGSSKREVAIIGGGIASALLSLALLRRSWQVTLYCADEAPALGASGNRQGALYPLLSKHDEALNRFFSNAFTFARRFYDQLPVKFDHDWCGVTQLGWDEKSQHKIAQMLSMDLPEELAVAVEANAVEQITGVATNCSGITYPQGGWLCPAELTRNVLELAQQQGLQIYYQYQLQDLSRKDDCWLLNFAEDQQATHSVVVLANGHQISRFSQTSSLPVYSVAGQVSHIPTTPELAKLKQVLCYDGYLTPQNPANQHHCIGASYHRGSEDTAYSDEDQQQNRQRLIDCFPQAQWAKEVDISEKEARCGVRCATRDHLPMVGNVPDYEATLVEYASLAEQKDKAVSAPVYDDLFMLDALGSRGLCSAPLCAEILAAQMSEEPIPMDASTLAALNPNRLWVRKLLKGKAVKAG</sequence>
<protein>
    <recommendedName>
        <fullName evidence="1">tRNA 5-methylaminomethyl-2-thiouridine biosynthesis bifunctional protein MnmC</fullName>
        <shortName evidence="1">tRNA mnm(5)s(2)U biosynthesis bifunctional protein</shortName>
    </recommendedName>
    <domain>
        <recommendedName>
            <fullName evidence="1">tRNA (mnm(5)s(2)U34)-methyltransferase</fullName>
            <ecNumber evidence="1">2.1.1.61</ecNumber>
        </recommendedName>
    </domain>
    <domain>
        <recommendedName>
            <fullName evidence="1">FAD-dependent cmnm(5)s(2)U34 oxidoreductase</fullName>
            <ecNumber evidence="1">1.5.-.-</ecNumber>
        </recommendedName>
    </domain>
</protein>
<dbReference type="EC" id="2.1.1.61" evidence="1"/>
<dbReference type="EC" id="1.5.-.-" evidence="1"/>
<dbReference type="EMBL" id="CP000034">
    <property type="protein sequence ID" value="ABB62593.1"/>
    <property type="status" value="ALT_INIT"/>
    <property type="molecule type" value="Genomic_DNA"/>
</dbReference>
<dbReference type="RefSeq" id="WP_000683778.1">
    <property type="nucleotide sequence ID" value="NC_007606.1"/>
</dbReference>
<dbReference type="RefSeq" id="YP_404084.2">
    <property type="nucleotide sequence ID" value="NC_007606.1"/>
</dbReference>
<dbReference type="SMR" id="Q32DL2"/>
<dbReference type="STRING" id="300267.SDY_2523"/>
<dbReference type="EnsemblBacteria" id="ABB62593">
    <property type="protein sequence ID" value="ABB62593"/>
    <property type="gene ID" value="SDY_2523"/>
</dbReference>
<dbReference type="KEGG" id="sdy:SDY_2523"/>
<dbReference type="PATRIC" id="fig|300267.13.peg.3038"/>
<dbReference type="HOGENOM" id="CLU_022427_1_0_6"/>
<dbReference type="Proteomes" id="UP000002716">
    <property type="component" value="Chromosome"/>
</dbReference>
<dbReference type="GO" id="GO:0005737">
    <property type="term" value="C:cytoplasm"/>
    <property type="evidence" value="ECO:0007669"/>
    <property type="project" value="UniProtKB-SubCell"/>
</dbReference>
<dbReference type="GO" id="GO:0050660">
    <property type="term" value="F:flavin adenine dinucleotide binding"/>
    <property type="evidence" value="ECO:0007669"/>
    <property type="project" value="UniProtKB-UniRule"/>
</dbReference>
<dbReference type="GO" id="GO:0016645">
    <property type="term" value="F:oxidoreductase activity, acting on the CH-NH group of donors"/>
    <property type="evidence" value="ECO:0007669"/>
    <property type="project" value="InterPro"/>
</dbReference>
<dbReference type="GO" id="GO:0004808">
    <property type="term" value="F:tRNA (5-methylaminomethyl-2-thiouridylate)(34)-methyltransferase activity"/>
    <property type="evidence" value="ECO:0007669"/>
    <property type="project" value="UniProtKB-EC"/>
</dbReference>
<dbReference type="GO" id="GO:0032259">
    <property type="term" value="P:methylation"/>
    <property type="evidence" value="ECO:0007669"/>
    <property type="project" value="UniProtKB-KW"/>
</dbReference>
<dbReference type="GO" id="GO:0002098">
    <property type="term" value="P:tRNA wobble uridine modification"/>
    <property type="evidence" value="ECO:0007669"/>
    <property type="project" value="TreeGrafter"/>
</dbReference>
<dbReference type="FunFam" id="3.40.50.150:FF:000107">
    <property type="entry name" value="tRNA 5-methylaminomethyl-2-thiouridine biosynthesis bifunctional protein MnmC"/>
    <property type="match status" value="1"/>
</dbReference>
<dbReference type="Gene3D" id="3.30.9.10">
    <property type="entry name" value="D-Amino Acid Oxidase, subunit A, domain 2"/>
    <property type="match status" value="1"/>
</dbReference>
<dbReference type="Gene3D" id="3.50.50.60">
    <property type="entry name" value="FAD/NAD(P)-binding domain"/>
    <property type="match status" value="1"/>
</dbReference>
<dbReference type="Gene3D" id="3.40.50.150">
    <property type="entry name" value="Vaccinia Virus protein VP39"/>
    <property type="match status" value="1"/>
</dbReference>
<dbReference type="HAMAP" id="MF_01102">
    <property type="entry name" value="MnmC"/>
    <property type="match status" value="1"/>
</dbReference>
<dbReference type="InterPro" id="IPR006076">
    <property type="entry name" value="FAD-dep_OxRdtase"/>
</dbReference>
<dbReference type="InterPro" id="IPR036188">
    <property type="entry name" value="FAD/NAD-bd_sf"/>
</dbReference>
<dbReference type="InterPro" id="IPR008471">
    <property type="entry name" value="MnmC-like_methylTransf"/>
</dbReference>
<dbReference type="InterPro" id="IPR029063">
    <property type="entry name" value="SAM-dependent_MTases_sf"/>
</dbReference>
<dbReference type="InterPro" id="IPR023032">
    <property type="entry name" value="tRNA_MAMT_biosynth_bifunc_MnmC"/>
</dbReference>
<dbReference type="InterPro" id="IPR047785">
    <property type="entry name" value="tRNA_MNMC2"/>
</dbReference>
<dbReference type="InterPro" id="IPR017610">
    <property type="entry name" value="tRNA_S-uridine_synth_MnmC_C"/>
</dbReference>
<dbReference type="NCBIfam" id="TIGR03197">
    <property type="entry name" value="MnmC_Cterm"/>
    <property type="match status" value="1"/>
</dbReference>
<dbReference type="NCBIfam" id="NF002480">
    <property type="entry name" value="PRK01747.1-1"/>
    <property type="match status" value="1"/>
</dbReference>
<dbReference type="NCBIfam" id="NF002481">
    <property type="entry name" value="PRK01747.1-2"/>
    <property type="match status" value="1"/>
</dbReference>
<dbReference type="NCBIfam" id="NF002482">
    <property type="entry name" value="PRK01747.1-3"/>
    <property type="match status" value="1"/>
</dbReference>
<dbReference type="NCBIfam" id="NF002484">
    <property type="entry name" value="PRK01747.1-5"/>
    <property type="match status" value="1"/>
</dbReference>
<dbReference type="NCBIfam" id="NF033855">
    <property type="entry name" value="tRNA_MNMC2"/>
    <property type="match status" value="1"/>
</dbReference>
<dbReference type="PANTHER" id="PTHR13847">
    <property type="entry name" value="SARCOSINE DEHYDROGENASE-RELATED"/>
    <property type="match status" value="1"/>
</dbReference>
<dbReference type="PANTHER" id="PTHR13847:SF283">
    <property type="entry name" value="TRNA 5-METHYLAMINOMETHYL-2-THIOURIDINE BIOSYNTHESIS BIFUNCTIONAL PROTEIN MNMC"/>
    <property type="match status" value="1"/>
</dbReference>
<dbReference type="Pfam" id="PF01266">
    <property type="entry name" value="DAO"/>
    <property type="match status" value="1"/>
</dbReference>
<dbReference type="Pfam" id="PF05430">
    <property type="entry name" value="Methyltransf_30"/>
    <property type="match status" value="1"/>
</dbReference>
<dbReference type="SUPFAM" id="SSF51905">
    <property type="entry name" value="FAD/NAD(P)-binding domain"/>
    <property type="match status" value="1"/>
</dbReference>